<reference key="1">
    <citation type="journal article" date="2011" name="J. Bacteriol.">
        <title>Genome sequence of lineage III Listeria monocytogenes strain HCC23.</title>
        <authorList>
            <person name="Steele C.L."/>
            <person name="Donaldson J.R."/>
            <person name="Paul D."/>
            <person name="Banes M.M."/>
            <person name="Arick T."/>
            <person name="Bridges S.M."/>
            <person name="Lawrence M.L."/>
        </authorList>
    </citation>
    <scope>NUCLEOTIDE SEQUENCE [LARGE SCALE GENOMIC DNA]</scope>
    <source>
        <strain>HCC23</strain>
    </source>
</reference>
<keyword id="KW-0687">Ribonucleoprotein</keyword>
<keyword id="KW-0689">Ribosomal protein</keyword>
<keyword id="KW-0694">RNA-binding</keyword>
<keyword id="KW-0699">rRNA-binding</keyword>
<accession>B8DHK6</accession>
<dbReference type="EMBL" id="CP001175">
    <property type="protein sequence ID" value="ACK39375.1"/>
    <property type="molecule type" value="Genomic_DNA"/>
</dbReference>
<dbReference type="RefSeq" id="WP_003726868.1">
    <property type="nucleotide sequence ID" value="NC_011660.1"/>
</dbReference>
<dbReference type="SMR" id="B8DHK6"/>
<dbReference type="GeneID" id="93239421"/>
<dbReference type="KEGG" id="lmh:LMHCC_1027"/>
<dbReference type="HOGENOM" id="CLU_061463_3_2_9"/>
<dbReference type="GO" id="GO:0005737">
    <property type="term" value="C:cytoplasm"/>
    <property type="evidence" value="ECO:0007669"/>
    <property type="project" value="UniProtKB-ARBA"/>
</dbReference>
<dbReference type="GO" id="GO:1990904">
    <property type="term" value="C:ribonucleoprotein complex"/>
    <property type="evidence" value="ECO:0007669"/>
    <property type="project" value="UniProtKB-KW"/>
</dbReference>
<dbReference type="GO" id="GO:0005840">
    <property type="term" value="C:ribosome"/>
    <property type="evidence" value="ECO:0007669"/>
    <property type="project" value="UniProtKB-KW"/>
</dbReference>
<dbReference type="GO" id="GO:0019843">
    <property type="term" value="F:rRNA binding"/>
    <property type="evidence" value="ECO:0007669"/>
    <property type="project" value="UniProtKB-UniRule"/>
</dbReference>
<dbReference type="GO" id="GO:0003735">
    <property type="term" value="F:structural constituent of ribosome"/>
    <property type="evidence" value="ECO:0007669"/>
    <property type="project" value="InterPro"/>
</dbReference>
<dbReference type="GO" id="GO:0006412">
    <property type="term" value="P:translation"/>
    <property type="evidence" value="ECO:0007669"/>
    <property type="project" value="UniProtKB-UniRule"/>
</dbReference>
<dbReference type="HAMAP" id="MF_01363">
    <property type="entry name" value="Ribosomal_bL21"/>
    <property type="match status" value="1"/>
</dbReference>
<dbReference type="InterPro" id="IPR028909">
    <property type="entry name" value="bL21-like"/>
</dbReference>
<dbReference type="InterPro" id="IPR036164">
    <property type="entry name" value="bL21-like_sf"/>
</dbReference>
<dbReference type="InterPro" id="IPR001787">
    <property type="entry name" value="Ribosomal_bL21"/>
</dbReference>
<dbReference type="InterPro" id="IPR018258">
    <property type="entry name" value="Ribosomal_bL21_CS"/>
</dbReference>
<dbReference type="NCBIfam" id="TIGR00061">
    <property type="entry name" value="L21"/>
    <property type="match status" value="1"/>
</dbReference>
<dbReference type="PANTHER" id="PTHR21349">
    <property type="entry name" value="50S RIBOSOMAL PROTEIN L21"/>
    <property type="match status" value="1"/>
</dbReference>
<dbReference type="PANTHER" id="PTHR21349:SF0">
    <property type="entry name" value="LARGE RIBOSOMAL SUBUNIT PROTEIN BL21M"/>
    <property type="match status" value="1"/>
</dbReference>
<dbReference type="Pfam" id="PF00829">
    <property type="entry name" value="Ribosomal_L21p"/>
    <property type="match status" value="1"/>
</dbReference>
<dbReference type="SUPFAM" id="SSF141091">
    <property type="entry name" value="L21p-like"/>
    <property type="match status" value="1"/>
</dbReference>
<dbReference type="PROSITE" id="PS01169">
    <property type="entry name" value="RIBOSOMAL_L21"/>
    <property type="match status" value="1"/>
</dbReference>
<gene>
    <name evidence="1" type="primary">rplU</name>
    <name type="ordered locus">LMHCC_1027</name>
</gene>
<feature type="chain" id="PRO_1000166727" description="Large ribosomal subunit protein bL21">
    <location>
        <begin position="1"/>
        <end position="102"/>
    </location>
</feature>
<sequence length="102" mass="11214">MYAIIETGGKQIKVEAGQEIYVEKLAGEVGDVVTFDKVLFVGGDSAKVGVPFVEGATVTAKVEKQGRAKKLTVYKYKPKKNYHKKQGHRQPYTKLTIDAINA</sequence>
<protein>
    <recommendedName>
        <fullName evidence="1">Large ribosomal subunit protein bL21</fullName>
    </recommendedName>
    <alternativeName>
        <fullName evidence="2">50S ribosomal protein L21</fullName>
    </alternativeName>
</protein>
<organism>
    <name type="scientific">Listeria monocytogenes serotype 4a (strain HCC23)</name>
    <dbReference type="NCBI Taxonomy" id="552536"/>
    <lineage>
        <taxon>Bacteria</taxon>
        <taxon>Bacillati</taxon>
        <taxon>Bacillota</taxon>
        <taxon>Bacilli</taxon>
        <taxon>Bacillales</taxon>
        <taxon>Listeriaceae</taxon>
        <taxon>Listeria</taxon>
    </lineage>
</organism>
<name>RL21_LISMH</name>
<comment type="function">
    <text evidence="1">This protein binds to 23S rRNA in the presence of protein L20.</text>
</comment>
<comment type="subunit">
    <text evidence="1">Part of the 50S ribosomal subunit. Contacts protein L20.</text>
</comment>
<comment type="similarity">
    <text evidence="1">Belongs to the bacterial ribosomal protein bL21 family.</text>
</comment>
<proteinExistence type="inferred from homology"/>
<evidence type="ECO:0000255" key="1">
    <source>
        <dbReference type="HAMAP-Rule" id="MF_01363"/>
    </source>
</evidence>
<evidence type="ECO:0000305" key="2"/>